<accession>B8ZZ34</accession>
<accession>A0A087WXQ4</accession>
<name>SHSA8_HUMAN</name>
<proteinExistence type="evidence at protein level"/>
<reference key="1">
    <citation type="journal article" date="1999" name="Nature">
        <title>The DNA sequence of human chromosome 22.</title>
        <authorList>
            <person name="Dunham I."/>
            <person name="Hunt A.R."/>
            <person name="Collins J.E."/>
            <person name="Bruskiewich R."/>
            <person name="Beare D.M."/>
            <person name="Clamp M."/>
            <person name="Smink L.J."/>
            <person name="Ainscough R."/>
            <person name="Almeida J.P."/>
            <person name="Babbage A.K."/>
            <person name="Bagguley C."/>
            <person name="Bailey J."/>
            <person name="Barlow K.F."/>
            <person name="Bates K.N."/>
            <person name="Beasley O.P."/>
            <person name="Bird C.P."/>
            <person name="Blakey S.E."/>
            <person name="Bridgeman A.M."/>
            <person name="Buck D."/>
            <person name="Burgess J."/>
            <person name="Burrill W.D."/>
            <person name="Burton J."/>
            <person name="Carder C."/>
            <person name="Carter N.P."/>
            <person name="Chen Y."/>
            <person name="Clark G."/>
            <person name="Clegg S.M."/>
            <person name="Cobley V.E."/>
            <person name="Cole C.G."/>
            <person name="Collier R.E."/>
            <person name="Connor R."/>
            <person name="Conroy D."/>
            <person name="Corby N.R."/>
            <person name="Coville G.J."/>
            <person name="Cox A.V."/>
            <person name="Davis J."/>
            <person name="Dawson E."/>
            <person name="Dhami P.D."/>
            <person name="Dockree C."/>
            <person name="Dodsworth S.J."/>
            <person name="Durbin R.M."/>
            <person name="Ellington A.G."/>
            <person name="Evans K.L."/>
            <person name="Fey J.M."/>
            <person name="Fleming K."/>
            <person name="French L."/>
            <person name="Garner A.A."/>
            <person name="Gilbert J.G.R."/>
            <person name="Goward M.E."/>
            <person name="Grafham D.V."/>
            <person name="Griffiths M.N.D."/>
            <person name="Hall C."/>
            <person name="Hall R.E."/>
            <person name="Hall-Tamlyn G."/>
            <person name="Heathcott R.W."/>
            <person name="Ho S."/>
            <person name="Holmes S."/>
            <person name="Hunt S.E."/>
            <person name="Jones M.C."/>
            <person name="Kershaw J."/>
            <person name="Kimberley A.M."/>
            <person name="King A."/>
            <person name="Laird G.K."/>
            <person name="Langford C.F."/>
            <person name="Leversha M.A."/>
            <person name="Lloyd C."/>
            <person name="Lloyd D.M."/>
            <person name="Martyn I.D."/>
            <person name="Mashreghi-Mohammadi M."/>
            <person name="Matthews L.H."/>
            <person name="Mccann O.T."/>
            <person name="Mcclay J."/>
            <person name="Mclaren S."/>
            <person name="McMurray A.A."/>
            <person name="Milne S.A."/>
            <person name="Mortimore B.J."/>
            <person name="Odell C.N."/>
            <person name="Pavitt R."/>
            <person name="Pearce A.V."/>
            <person name="Pearson D."/>
            <person name="Phillimore B.J.C.T."/>
            <person name="Phillips S.H."/>
            <person name="Plumb R.W."/>
            <person name="Ramsay H."/>
            <person name="Ramsey Y."/>
            <person name="Rogers L."/>
            <person name="Ross M.T."/>
            <person name="Scott C.E."/>
            <person name="Sehra H.K."/>
            <person name="Skuce C.D."/>
            <person name="Smalley S."/>
            <person name="Smith M.L."/>
            <person name="Soderlund C."/>
            <person name="Spragon L."/>
            <person name="Steward C.A."/>
            <person name="Sulston J.E."/>
            <person name="Swann R.M."/>
            <person name="Vaudin M."/>
            <person name="Wall M."/>
            <person name="Wallis J.M."/>
            <person name="Whiteley M.N."/>
            <person name="Willey D.L."/>
            <person name="Williams L."/>
            <person name="Williams S.A."/>
            <person name="Williamson H."/>
            <person name="Wilmer T.E."/>
            <person name="Wilming L."/>
            <person name="Wright C.L."/>
            <person name="Hubbard T."/>
            <person name="Bentley D.R."/>
            <person name="Beck S."/>
            <person name="Rogers J."/>
            <person name="Shimizu N."/>
            <person name="Minoshima S."/>
            <person name="Kawasaki K."/>
            <person name="Sasaki T."/>
            <person name="Asakawa S."/>
            <person name="Kudoh J."/>
            <person name="Shintani A."/>
            <person name="Shibuya K."/>
            <person name="Yoshizaki Y."/>
            <person name="Aoki N."/>
            <person name="Mitsuyama S."/>
            <person name="Roe B.A."/>
            <person name="Chen F."/>
            <person name="Chu L."/>
            <person name="Crabtree J."/>
            <person name="Deschamps S."/>
            <person name="Do A."/>
            <person name="Do T."/>
            <person name="Dorman A."/>
            <person name="Fang F."/>
            <person name="Fu Y."/>
            <person name="Hu P."/>
            <person name="Hua A."/>
            <person name="Kenton S."/>
            <person name="Lai H."/>
            <person name="Lao H.I."/>
            <person name="Lewis J."/>
            <person name="Lewis S."/>
            <person name="Lin S.-P."/>
            <person name="Loh P."/>
            <person name="Malaj E."/>
            <person name="Nguyen T."/>
            <person name="Pan H."/>
            <person name="Phan S."/>
            <person name="Qi S."/>
            <person name="Qian Y."/>
            <person name="Ray L."/>
            <person name="Ren Q."/>
            <person name="Shaull S."/>
            <person name="Sloan D."/>
            <person name="Song L."/>
            <person name="Wang Q."/>
            <person name="Wang Y."/>
            <person name="Wang Z."/>
            <person name="White J."/>
            <person name="Willingham D."/>
            <person name="Wu H."/>
            <person name="Yao Z."/>
            <person name="Zhan M."/>
            <person name="Zhang G."/>
            <person name="Chissoe S."/>
            <person name="Murray J."/>
            <person name="Miller N."/>
            <person name="Minx P."/>
            <person name="Fulton R."/>
            <person name="Johnson D."/>
            <person name="Bemis G."/>
            <person name="Bentley D."/>
            <person name="Bradshaw H."/>
            <person name="Bourne S."/>
            <person name="Cordes M."/>
            <person name="Du Z."/>
            <person name="Fulton L."/>
            <person name="Goela D."/>
            <person name="Graves T."/>
            <person name="Hawkins J."/>
            <person name="Hinds K."/>
            <person name="Kemp K."/>
            <person name="Latreille P."/>
            <person name="Layman D."/>
            <person name="Ozersky P."/>
            <person name="Rohlfing T."/>
            <person name="Scheet P."/>
            <person name="Walker C."/>
            <person name="Wamsley A."/>
            <person name="Wohldmann P."/>
            <person name="Pepin K."/>
            <person name="Nelson J."/>
            <person name="Korf I."/>
            <person name="Bedell J.A."/>
            <person name="Hillier L.W."/>
            <person name="Mardis E."/>
            <person name="Waterston R."/>
            <person name="Wilson R."/>
            <person name="Emanuel B.S."/>
            <person name="Shaikh T."/>
            <person name="Kurahashi H."/>
            <person name="Saitta S."/>
            <person name="Budarf M.L."/>
            <person name="McDermid H.E."/>
            <person name="Johnson A."/>
            <person name="Wong A.C.C."/>
            <person name="Morrow B.E."/>
            <person name="Edelmann L."/>
            <person name="Kim U.J."/>
            <person name="Shizuya H."/>
            <person name="Simon M.I."/>
            <person name="Dumanski J.P."/>
            <person name="Peyrard M."/>
            <person name="Kedra D."/>
            <person name="Seroussi E."/>
            <person name="Fransson I."/>
            <person name="Tapia I."/>
            <person name="Bruder C.E."/>
            <person name="O'Brien K.P."/>
            <person name="Wilkinson P."/>
            <person name="Bodenteich A."/>
            <person name="Hartman K."/>
            <person name="Hu X."/>
            <person name="Khan A.S."/>
            <person name="Lane L."/>
            <person name="Tilahun Y."/>
            <person name="Wright H."/>
        </authorList>
    </citation>
    <scope>NUCLEOTIDE SEQUENCE [LARGE SCALE GENOMIC DNA]</scope>
</reference>
<protein>
    <recommendedName>
        <fullName evidence="4">Protein shisa-8</fullName>
    </recommendedName>
    <alternativeName>
        <fullName evidence="4">Shisa family member 8</fullName>
    </alternativeName>
</protein>
<keyword id="KW-0025">Alternative splicing</keyword>
<keyword id="KW-0325">Glycoprotein</keyword>
<keyword id="KW-0472">Membrane</keyword>
<keyword id="KW-1267">Proteomics identification</keyword>
<keyword id="KW-1185">Reference proteome</keyword>
<keyword id="KW-0732">Signal</keyword>
<keyword id="KW-0812">Transmembrane</keyword>
<keyword id="KW-1133">Transmembrane helix</keyword>
<sequence>MARAGARGLLGGRRPPGLRLALALRLALLLARPPSGRAGAPEAQGPAAPGTTAPEGGDRCRGYYDVMGQWDPPFNCSSGAYSFCCGTCGYRFCCHDGPRRLDQSRCSNYDTPAWVQTGRPPARARDTAAPRDPGRERSHTAVYAVCGVAALLVLAGIGARLGLERAHSPRARRTVTRALTELLKQPGPQEPLPPTLGPPLGGCVQVQMGDGLPRGSPHNSADKKRLNNAPRGSAAPGPPRGPRLQGGGSLTLQPDYAKYATFKAAALKAAEAAPRDFCQRFPALEPSPRQPPARAPRPSPDLPAPLDACPWAPPVYAPPAAPGPYAAWTSSRPARPAPLSHPTARAFQVPRRPGHAARRQFSVKMPETFNPQLPGLYGSAGRGSRYLRTNSKTEVTV</sequence>
<dbReference type="EMBL" id="Z99716">
    <property type="status" value="NOT_ANNOTATED_CDS"/>
    <property type="molecule type" value="Genomic_DNA"/>
</dbReference>
<dbReference type="CCDS" id="CCDS74872.1">
    <molecule id="B8ZZ34-1"/>
</dbReference>
<dbReference type="RefSeq" id="NP_001193949.1">
    <molecule id="B8ZZ34-1"/>
    <property type="nucleotide sequence ID" value="NM_001207020.3"/>
</dbReference>
<dbReference type="RefSeq" id="NP_001340367.1">
    <molecule id="B8ZZ34-3"/>
    <property type="nucleotide sequence ID" value="NM_001353438.2"/>
</dbReference>
<dbReference type="RefSeq" id="XP_006724317.1">
    <property type="nucleotide sequence ID" value="XM_006724254.3"/>
</dbReference>
<dbReference type="SMR" id="B8ZZ34"/>
<dbReference type="BioGRID" id="136928">
    <property type="interactions" value="3"/>
</dbReference>
<dbReference type="FunCoup" id="B8ZZ34">
    <property type="interactions" value="3"/>
</dbReference>
<dbReference type="STRING" id="9606.ENSP00000481203"/>
<dbReference type="TCDB" id="8.A.83.1.2">
    <property type="family name" value="the shisa6 regulator of short-term neuronal synaptic plasticity (shisa) family"/>
</dbReference>
<dbReference type="GlyCosmos" id="B8ZZ34">
    <property type="glycosylation" value="1 site, No reported glycans"/>
</dbReference>
<dbReference type="GlyGen" id="B8ZZ34">
    <property type="glycosylation" value="2 sites"/>
</dbReference>
<dbReference type="iPTMnet" id="B8ZZ34"/>
<dbReference type="PhosphoSitePlus" id="B8ZZ34"/>
<dbReference type="BioMuta" id="SHISA8"/>
<dbReference type="jPOST" id="B8ZZ34"/>
<dbReference type="MassIVE" id="B8ZZ34"/>
<dbReference type="PaxDb" id="9606-ENSP00000481203"/>
<dbReference type="PeptideAtlas" id="B8ZZ34"/>
<dbReference type="ProteomicsDB" id="7297"/>
<dbReference type="Antibodypedia" id="71661">
    <property type="antibodies" value="4 antibodies from 4 providers"/>
</dbReference>
<dbReference type="DNASU" id="440829"/>
<dbReference type="Ensembl" id="ENST00000621082.2">
    <molecule id="B8ZZ34-1"/>
    <property type="protein sequence ID" value="ENSP00000481203.1"/>
    <property type="gene ID" value="ENSG00000234965.3"/>
</dbReference>
<dbReference type="GeneID" id="440829"/>
<dbReference type="KEGG" id="hsa:440829"/>
<dbReference type="MANE-Select" id="ENST00000621082.2">
    <property type="protein sequence ID" value="ENSP00000481203.1"/>
    <property type="RefSeq nucleotide sequence ID" value="NM_001207020.3"/>
    <property type="RefSeq protein sequence ID" value="NP_001193949.1"/>
</dbReference>
<dbReference type="UCSC" id="uc062esx.1">
    <molecule id="B8ZZ34-1"/>
    <property type="organism name" value="human"/>
</dbReference>
<dbReference type="AGR" id="HGNC:18351"/>
<dbReference type="CTD" id="440829"/>
<dbReference type="DisGeNET" id="440829"/>
<dbReference type="GeneCards" id="SHISA8"/>
<dbReference type="HGNC" id="HGNC:18351">
    <property type="gene designation" value="SHISA8"/>
</dbReference>
<dbReference type="HPA" id="ENSG00000234965">
    <property type="expression patterns" value="Tissue enriched (brain)"/>
</dbReference>
<dbReference type="MIM" id="617329">
    <property type="type" value="gene"/>
</dbReference>
<dbReference type="neXtProt" id="NX_B8ZZ34"/>
<dbReference type="OpenTargets" id="ENSG00000234965"/>
<dbReference type="PharmGKB" id="PA165378367"/>
<dbReference type="VEuPathDB" id="HostDB:ENSG00000234965"/>
<dbReference type="eggNOG" id="ENOG502R5Y2">
    <property type="taxonomic scope" value="Eukaryota"/>
</dbReference>
<dbReference type="GeneTree" id="ENSGT00940000163233"/>
<dbReference type="HOGENOM" id="CLU_083907_2_1_1"/>
<dbReference type="InParanoid" id="B8ZZ34"/>
<dbReference type="OMA" id="NPTRDKT"/>
<dbReference type="OrthoDB" id="9996010at2759"/>
<dbReference type="PAN-GO" id="B8ZZ34">
    <property type="GO annotations" value="6 GO annotations based on evolutionary models"/>
</dbReference>
<dbReference type="PathwayCommons" id="B8ZZ34"/>
<dbReference type="BioGRID-ORCS" id="440829">
    <property type="hits" value="8 hits in 300 CRISPR screens"/>
</dbReference>
<dbReference type="ChiTaRS" id="SHISA8">
    <property type="organism name" value="human"/>
</dbReference>
<dbReference type="GenomeRNAi" id="440829"/>
<dbReference type="Pharos" id="B8ZZ34">
    <property type="development level" value="Tdark"/>
</dbReference>
<dbReference type="PRO" id="PR:B8ZZ34"/>
<dbReference type="Proteomes" id="UP000005640">
    <property type="component" value="Chromosome 22"/>
</dbReference>
<dbReference type="RNAct" id="B8ZZ34">
    <property type="molecule type" value="protein"/>
</dbReference>
<dbReference type="Bgee" id="ENSG00000234965">
    <property type="expression patterns" value="Expressed in right hemisphere of cerebellum and 79 other cell types or tissues"/>
</dbReference>
<dbReference type="ExpressionAtlas" id="B8ZZ34">
    <property type="expression patterns" value="baseline and differential"/>
</dbReference>
<dbReference type="GO" id="GO:0032281">
    <property type="term" value="C:AMPA glutamate receptor complex"/>
    <property type="evidence" value="ECO:0000318"/>
    <property type="project" value="GO_Central"/>
</dbReference>
<dbReference type="GO" id="GO:0032591">
    <property type="term" value="C:dendritic spine membrane"/>
    <property type="evidence" value="ECO:0000318"/>
    <property type="project" value="GO_Central"/>
</dbReference>
<dbReference type="GO" id="GO:0014069">
    <property type="term" value="C:postsynaptic density"/>
    <property type="evidence" value="ECO:0000318"/>
    <property type="project" value="GO_Central"/>
</dbReference>
<dbReference type="GO" id="GO:0045211">
    <property type="term" value="C:postsynaptic membrane"/>
    <property type="evidence" value="ECO:0000318"/>
    <property type="project" value="GO_Central"/>
</dbReference>
<dbReference type="GO" id="GO:0048172">
    <property type="term" value="P:regulation of short-term neuronal synaptic plasticity"/>
    <property type="evidence" value="ECO:0000318"/>
    <property type="project" value="GO_Central"/>
</dbReference>
<dbReference type="InterPro" id="IPR026910">
    <property type="entry name" value="Shisa"/>
</dbReference>
<dbReference type="InterPro" id="IPR053891">
    <property type="entry name" value="Shisa_N"/>
</dbReference>
<dbReference type="PANTHER" id="PTHR31774:SF14">
    <property type="entry name" value="PROTEIN SHISA-8"/>
    <property type="match status" value="1"/>
</dbReference>
<dbReference type="PANTHER" id="PTHR31774">
    <property type="entry name" value="PROTEIN SHISA-9-RELATED"/>
    <property type="match status" value="1"/>
</dbReference>
<dbReference type="Pfam" id="PF13908">
    <property type="entry name" value="Shisa_N"/>
    <property type="match status" value="1"/>
</dbReference>
<gene>
    <name evidence="5" type="primary">SHISA8</name>
    <name evidence="5" type="synonym">C22orf17</name>
</gene>
<evidence type="ECO:0000250" key="1">
    <source>
        <dbReference type="UniProtKB" id="J3QNX5"/>
    </source>
</evidence>
<evidence type="ECO:0000255" key="2"/>
<evidence type="ECO:0000256" key="3">
    <source>
        <dbReference type="SAM" id="MobiDB-lite"/>
    </source>
</evidence>
<evidence type="ECO:0000305" key="4"/>
<evidence type="ECO:0000312" key="5">
    <source>
        <dbReference type="HGNC" id="HGNC:18351"/>
    </source>
</evidence>
<feature type="signal peptide" evidence="2">
    <location>
        <begin position="1"/>
        <end position="38"/>
    </location>
</feature>
<feature type="chain" id="PRO_0000395039" description="Protein shisa-8">
    <location>
        <begin position="39"/>
        <end position="397"/>
    </location>
</feature>
<feature type="topological domain" description="Extracellular" evidence="2">
    <location>
        <begin position="39"/>
        <end position="138"/>
    </location>
</feature>
<feature type="transmembrane region" description="Helical" evidence="2">
    <location>
        <begin position="139"/>
        <end position="159"/>
    </location>
</feature>
<feature type="topological domain" description="Cytoplasmic" evidence="2">
    <location>
        <begin position="160"/>
        <end position="397"/>
    </location>
</feature>
<feature type="region of interest" description="Disordered" evidence="3">
    <location>
        <begin position="117"/>
        <end position="136"/>
    </location>
</feature>
<feature type="region of interest" description="Disordered" evidence="3">
    <location>
        <begin position="182"/>
        <end position="250"/>
    </location>
</feature>
<feature type="region of interest" description="Disordered" evidence="3">
    <location>
        <begin position="281"/>
        <end position="303"/>
    </location>
</feature>
<feature type="compositionally biased region" description="Basic and acidic residues" evidence="3">
    <location>
        <begin position="123"/>
        <end position="136"/>
    </location>
</feature>
<feature type="compositionally biased region" description="Pro residues" evidence="3">
    <location>
        <begin position="188"/>
        <end position="197"/>
    </location>
</feature>
<feature type="compositionally biased region" description="Pro residues" evidence="3">
    <location>
        <begin position="288"/>
        <end position="303"/>
    </location>
</feature>
<feature type="glycosylation site" description="N-linked (GlcNAc...) asparagine" evidence="2">
    <location>
        <position position="75"/>
    </location>
</feature>
<feature type="splice variant" id="VSP_059385" description="In isoform 1.">
    <original>A</original>
    <variation>AGPRTPRLARASPPGEPFMRVAPPGLAAAAAARDSEPGPVPGAGGCGEDRLGSQPRPENGPPGSHRTASGRGLRRGDSEGGVNRGIGPSRVSLLAP</variation>
    <location>
        <position position="221"/>
    </location>
</feature>
<organism>
    <name type="scientific">Homo sapiens</name>
    <name type="common">Human</name>
    <dbReference type="NCBI Taxonomy" id="9606"/>
    <lineage>
        <taxon>Eukaryota</taxon>
        <taxon>Metazoa</taxon>
        <taxon>Chordata</taxon>
        <taxon>Craniata</taxon>
        <taxon>Vertebrata</taxon>
        <taxon>Euteleostomi</taxon>
        <taxon>Mammalia</taxon>
        <taxon>Eutheria</taxon>
        <taxon>Euarchontoglires</taxon>
        <taxon>Primates</taxon>
        <taxon>Haplorrhini</taxon>
        <taxon>Catarrhini</taxon>
        <taxon>Hominidae</taxon>
        <taxon>Homo</taxon>
    </lineage>
</organism>
<comment type="function">
    <text evidence="1">May regulate trafficking and current kinetics of AMPA-type glutamate receptor (AMPAR) at synapses.</text>
</comment>
<comment type="subunit">
    <text evidence="1">Interacts with AMPAR subunits GRIA1 and GRIA2.</text>
</comment>
<comment type="subcellular location">
    <subcellularLocation>
        <location evidence="4">Membrane</location>
        <topology evidence="4">Single-pass type I membrane protein</topology>
    </subcellularLocation>
</comment>
<comment type="alternative products">
    <event type="alternative splicing"/>
    <isoform>
        <id>B8ZZ34-1</id>
        <name>2</name>
        <sequence type="displayed"/>
    </isoform>
    <isoform>
        <id>B8ZZ34-3</id>
        <name>1</name>
        <sequence type="described" ref="VSP_059385"/>
    </isoform>
</comment>
<comment type="similarity">
    <text evidence="4">Belongs to the shisa family.</text>
</comment>